<organism>
    <name type="scientific">Acinetobacter baylyi (strain ATCC 33305 / BD413 / ADP1)</name>
    <dbReference type="NCBI Taxonomy" id="62977"/>
    <lineage>
        <taxon>Bacteria</taxon>
        <taxon>Pseudomonadati</taxon>
        <taxon>Pseudomonadota</taxon>
        <taxon>Gammaproteobacteria</taxon>
        <taxon>Moraxellales</taxon>
        <taxon>Moraxellaceae</taxon>
        <taxon>Acinetobacter</taxon>
    </lineage>
</organism>
<comment type="similarity">
    <text evidence="1">Belongs to the bacterial ribosomal protein bL32 family.</text>
</comment>
<protein>
    <recommendedName>
        <fullName evidence="1">Large ribosomal subunit protein bL32</fullName>
    </recommendedName>
    <alternativeName>
        <fullName evidence="3">50S ribosomal protein L32</fullName>
    </alternativeName>
</protein>
<gene>
    <name evidence="1" type="primary">rpmF</name>
    <name type="ordered locus">ACIAD0869</name>
</gene>
<feature type="chain" id="PRO_0000172297" description="Large ribosomal subunit protein bL32">
    <location>
        <begin position="1"/>
        <end position="61"/>
    </location>
</feature>
<feature type="region of interest" description="Disordered" evidence="2">
    <location>
        <begin position="1"/>
        <end position="44"/>
    </location>
</feature>
<feature type="compositionally biased region" description="Basic residues" evidence="2">
    <location>
        <begin position="7"/>
        <end position="16"/>
    </location>
</feature>
<feature type="compositionally biased region" description="Polar residues" evidence="2">
    <location>
        <begin position="25"/>
        <end position="34"/>
    </location>
</feature>
<proteinExistence type="inferred from homology"/>
<reference key="1">
    <citation type="journal article" date="2004" name="Nucleic Acids Res.">
        <title>Unique features revealed by the genome sequence of Acinetobacter sp. ADP1, a versatile and naturally transformation competent bacterium.</title>
        <authorList>
            <person name="Barbe V."/>
            <person name="Vallenet D."/>
            <person name="Fonknechten N."/>
            <person name="Kreimeyer A."/>
            <person name="Oztas S."/>
            <person name="Labarre L."/>
            <person name="Cruveiller S."/>
            <person name="Robert C."/>
            <person name="Duprat S."/>
            <person name="Wincker P."/>
            <person name="Ornston L.N."/>
            <person name="Weissenbach J."/>
            <person name="Marliere P."/>
            <person name="Cohen G.N."/>
            <person name="Medigue C."/>
        </authorList>
    </citation>
    <scope>NUCLEOTIDE SEQUENCE [LARGE SCALE GENOMIC DNA]</scope>
    <source>
        <strain>ATCC 33305 / BD413 / ADP1</strain>
    </source>
</reference>
<sequence length="61" mass="7076">MAVQQNRKSRSRRDMRRSHDALTENALTVDQTTGETHRRHHVTKDGIYRGRQLFAKAADAE</sequence>
<evidence type="ECO:0000255" key="1">
    <source>
        <dbReference type="HAMAP-Rule" id="MF_00340"/>
    </source>
</evidence>
<evidence type="ECO:0000256" key="2">
    <source>
        <dbReference type="SAM" id="MobiDB-lite"/>
    </source>
</evidence>
<evidence type="ECO:0000305" key="3"/>
<name>RL32_ACIAD</name>
<accession>Q6FDU0</accession>
<keyword id="KW-0687">Ribonucleoprotein</keyword>
<keyword id="KW-0689">Ribosomal protein</keyword>
<dbReference type="EMBL" id="CR543861">
    <property type="protein sequence ID" value="CAG67768.1"/>
    <property type="molecule type" value="Genomic_DNA"/>
</dbReference>
<dbReference type="RefSeq" id="WP_004922151.1">
    <property type="nucleotide sequence ID" value="NC_005966.1"/>
</dbReference>
<dbReference type="SMR" id="Q6FDU0"/>
<dbReference type="STRING" id="202950.GCA_001485005_02618"/>
<dbReference type="GeneID" id="67510367"/>
<dbReference type="KEGG" id="aci:ACIAD0869"/>
<dbReference type="eggNOG" id="COG0333">
    <property type="taxonomic scope" value="Bacteria"/>
</dbReference>
<dbReference type="HOGENOM" id="CLU_129084_2_1_6"/>
<dbReference type="OrthoDB" id="9801927at2"/>
<dbReference type="BioCyc" id="ASP62977:ACIAD_RS04010-MONOMER"/>
<dbReference type="Proteomes" id="UP000000430">
    <property type="component" value="Chromosome"/>
</dbReference>
<dbReference type="GO" id="GO:0015934">
    <property type="term" value="C:large ribosomal subunit"/>
    <property type="evidence" value="ECO:0007669"/>
    <property type="project" value="InterPro"/>
</dbReference>
<dbReference type="GO" id="GO:0003735">
    <property type="term" value="F:structural constituent of ribosome"/>
    <property type="evidence" value="ECO:0007669"/>
    <property type="project" value="InterPro"/>
</dbReference>
<dbReference type="GO" id="GO:0006412">
    <property type="term" value="P:translation"/>
    <property type="evidence" value="ECO:0007669"/>
    <property type="project" value="UniProtKB-UniRule"/>
</dbReference>
<dbReference type="HAMAP" id="MF_00340">
    <property type="entry name" value="Ribosomal_bL32"/>
    <property type="match status" value="1"/>
</dbReference>
<dbReference type="InterPro" id="IPR002677">
    <property type="entry name" value="Ribosomal_bL32"/>
</dbReference>
<dbReference type="InterPro" id="IPR044957">
    <property type="entry name" value="Ribosomal_bL32_bact"/>
</dbReference>
<dbReference type="InterPro" id="IPR011332">
    <property type="entry name" value="Ribosomal_zn-bd"/>
</dbReference>
<dbReference type="NCBIfam" id="TIGR01031">
    <property type="entry name" value="rpmF_bact"/>
    <property type="match status" value="1"/>
</dbReference>
<dbReference type="PANTHER" id="PTHR35534">
    <property type="entry name" value="50S RIBOSOMAL PROTEIN L32"/>
    <property type="match status" value="1"/>
</dbReference>
<dbReference type="PANTHER" id="PTHR35534:SF1">
    <property type="entry name" value="LARGE RIBOSOMAL SUBUNIT PROTEIN BL32"/>
    <property type="match status" value="1"/>
</dbReference>
<dbReference type="Pfam" id="PF01783">
    <property type="entry name" value="Ribosomal_L32p"/>
    <property type="match status" value="1"/>
</dbReference>
<dbReference type="SUPFAM" id="SSF57829">
    <property type="entry name" value="Zn-binding ribosomal proteins"/>
    <property type="match status" value="1"/>
</dbReference>